<reference evidence="5" key="1">
    <citation type="journal article" date="1997" name="Proc. Natl. Acad. Sci. U.S.A.">
        <title>A screen for fast evolving genes from Drosophila.</title>
        <authorList>
            <person name="Schmid K.J."/>
            <person name="Tautz D."/>
        </authorList>
    </citation>
    <scope>NUCLEOTIDE SEQUENCE [MRNA]</scope>
</reference>
<reference evidence="7" key="2">
    <citation type="journal article" date="2007" name="Nature">
        <title>Evolution of genes and genomes on the Drosophila phylogeny.</title>
        <authorList>
            <consortium name="Drosophila 12 genomes consortium"/>
        </authorList>
    </citation>
    <scope>NUCLEOTIDE SEQUENCE [LARGE SCALE GENOMIC DNA]</scope>
    <source>
        <strain evidence="7">Tai18E2 / Tucson 14021-0261.01</strain>
    </source>
</reference>
<reference evidence="6" key="3">
    <citation type="journal article" date="2009" name="Genetics">
        <title>Molecular population genetics and evolution of Drosophila meiosis genes.</title>
        <authorList>
            <person name="Anderson J.A."/>
            <person name="Gilliland W.D."/>
            <person name="Langley C.H."/>
        </authorList>
    </citation>
    <scope>NUCLEOTIDE SEQUENCE [GENOMIC DNA] OF 1-141</scope>
</reference>
<accession>B4PKZ7</accession>
<accession>B6UW57</accession>
<accession>O16047</accession>
<feature type="chain" id="PRO_0000379492" description="Telomere-binding protein cav">
    <location>
        <begin position="1"/>
        <end position="319"/>
    </location>
</feature>
<feature type="region of interest" description="Required for binding to Su(var)205" evidence="1">
    <location>
        <begin position="107"/>
        <end position="312"/>
    </location>
</feature>
<feature type="region of interest" description="Disordered" evidence="3">
    <location>
        <begin position="141"/>
        <end position="163"/>
    </location>
</feature>
<feature type="region of interest" description="Disordered" evidence="3">
    <location>
        <begin position="186"/>
        <end position="248"/>
    </location>
</feature>
<feature type="region of interest" description="Disordered" evidence="3">
    <location>
        <begin position="291"/>
        <end position="319"/>
    </location>
</feature>
<feature type="short sequence motif" description="Su(var)205-binding Pro-containing repeat 1" evidence="2">
    <location>
        <begin position="220"/>
        <end position="224"/>
    </location>
</feature>
<feature type="short sequence motif" description="Su(var)205-binding Pro-containing repeat 2" evidence="2">
    <location>
        <begin position="273"/>
        <end position="279"/>
    </location>
</feature>
<feature type="compositionally biased region" description="Polar residues" evidence="3">
    <location>
        <begin position="291"/>
        <end position="311"/>
    </location>
</feature>
<feature type="sequence conflict" description="In Ref. 1; AAB81483." evidence="4" ref="1">
    <original>K</original>
    <variation>R</variation>
    <location>
        <position position="81"/>
    </location>
</feature>
<feature type="sequence conflict" description="In Ref. 1; AAB81483." evidence="4" ref="1">
    <original>G</original>
    <variation>A</variation>
    <location>
        <position position="232"/>
    </location>
</feature>
<feature type="sequence conflict" description="In Ref. 1; AAB81483." evidence="4" ref="1">
    <original>D</original>
    <variation>E</variation>
    <location>
        <position position="244"/>
    </location>
</feature>
<feature type="sequence conflict" description="In Ref. 1; AAB81483." evidence="4" ref="1">
    <original>G</original>
    <variation>A</variation>
    <location>
        <position position="302"/>
    </location>
</feature>
<feature type="sequence conflict" description="In Ref. 1; AAB81483." evidence="4" ref="1">
    <original>V</original>
    <variation>ARDV</variation>
    <location>
        <position position="318"/>
    </location>
</feature>
<name>CAV_DROYA</name>
<comment type="function">
    <text evidence="1">Binds to chromosome ends in a sequence-dependent manner and is required for telomere capping.</text>
</comment>
<comment type="subunit">
    <text evidence="1">Interacts (via C-terminus) with Su(var)205 dimer (via hinge and chromoshadow domain) and with moi to form the terminin, telomere-capping, complex. Interacts with HP6, which is also part of the terminin complex (By similarity).</text>
</comment>
<comment type="subcellular location">
    <subcellularLocation>
        <location evidence="1">Nucleus</location>
    </subcellularLocation>
    <subcellularLocation>
        <location evidence="1">Chromosome</location>
        <location evidence="1">Telomere</location>
    </subcellularLocation>
</comment>
<comment type="miscellaneous">
    <text>Multiple telomeric associations (TAs) in the same metaphase spread often result in multicentric linear chromosomes that resemble little 'trains' of chromosomes, hence the name 'caravaggio', an Italian train.</text>
</comment>
<protein>
    <recommendedName>
        <fullName evidence="1">Telomere-binding protein cav</fullName>
    </recommendedName>
    <alternativeName>
        <fullName evidence="7">Anon-EST:fe1G5</fullName>
    </alternativeName>
</protein>
<gene>
    <name evidence="1" type="primary">cav</name>
    <name evidence="7" type="synonym">anon-EST:fe1G5</name>
    <name type="ORF">GE23460</name>
</gene>
<sequence length="319" mass="36929">MSGMQISSYLRKYLADEDKKIREEFKESDPNNEMILWMHEKTRITEEDLARPYTEDEVRELCLRTKVKVNMTAWNCLWEAKKRFDAKGRFERKSEEFINLMYLKAVRRKMVQPYPEDYVAQRREIAAAETKKDNISRLDRWQKQKRRNQSAHATQPDSQDNEVVEIHDDTNRYSVSQAVALPVLTPSDLSGIGDDEDEQQQQHHHHKHRSGFQNEHADCPETQMRCDQADSGRLPNGPTNSESDPDYYMFGTQLSRSIQPTSTQEADDQLACPETEMNESWVRCDQINSESMSIGPSINSDGSISFQNSGSEPIDVDVN</sequence>
<keyword id="KW-0158">Chromosome</keyword>
<keyword id="KW-0238">DNA-binding</keyword>
<keyword id="KW-0539">Nucleus</keyword>
<keyword id="KW-0677">Repeat</keyword>
<keyword id="KW-0779">Telomere</keyword>
<evidence type="ECO:0000250" key="1">
    <source>
        <dbReference type="UniProtKB" id="Q95RV2"/>
    </source>
</evidence>
<evidence type="ECO:0000255" key="2"/>
<evidence type="ECO:0000256" key="3">
    <source>
        <dbReference type="SAM" id="MobiDB-lite"/>
    </source>
</evidence>
<evidence type="ECO:0000305" key="4"/>
<evidence type="ECO:0000312" key="5">
    <source>
        <dbReference type="EMBL" id="AAB81483.1"/>
    </source>
</evidence>
<evidence type="ECO:0000312" key="6">
    <source>
        <dbReference type="EMBL" id="ACI96380.1"/>
    </source>
</evidence>
<evidence type="ECO:0000312" key="7">
    <source>
        <dbReference type="EMBL" id="EDW98982.1"/>
    </source>
</evidence>
<proteinExistence type="evidence at transcript level"/>
<dbReference type="EMBL" id="AF005852">
    <property type="protein sequence ID" value="AAB81483.1"/>
    <property type="molecule type" value="mRNA"/>
</dbReference>
<dbReference type="EMBL" id="CM000160">
    <property type="protein sequence ID" value="EDW98982.1"/>
    <property type="molecule type" value="Genomic_DNA"/>
</dbReference>
<dbReference type="EMBL" id="FJ218755">
    <property type="protein sequence ID" value="ACI96380.1"/>
    <property type="molecule type" value="Genomic_DNA"/>
</dbReference>
<dbReference type="EnsemblMetazoa" id="FBtr0269978">
    <property type="protein sequence ID" value="FBpp0268470"/>
    <property type="gene ID" value="FBgn0022414"/>
</dbReference>
<dbReference type="EnsemblMetazoa" id="XM_002099234.4">
    <property type="protein sequence ID" value="XP_002099270.1"/>
    <property type="gene ID" value="LOC6538756"/>
</dbReference>
<dbReference type="GeneID" id="6538756"/>
<dbReference type="KEGG" id="dya:Dyak_GE23460"/>
<dbReference type="eggNOG" id="ENOG502RN8H">
    <property type="taxonomic scope" value="Eukaryota"/>
</dbReference>
<dbReference type="HOGENOM" id="CLU_059636_0_0_1"/>
<dbReference type="OMA" id="QINSESM"/>
<dbReference type="OrthoDB" id="7934455at2759"/>
<dbReference type="PhylomeDB" id="B4PKZ7"/>
<dbReference type="ChiTaRS" id="cav">
    <property type="organism name" value="fly"/>
</dbReference>
<dbReference type="Proteomes" id="UP000002282">
    <property type="component" value="Chromosome 3R"/>
</dbReference>
<dbReference type="GO" id="GO:0000775">
    <property type="term" value="C:chromosome, centromeric region"/>
    <property type="evidence" value="ECO:0007669"/>
    <property type="project" value="EnsemblMetazoa"/>
</dbReference>
<dbReference type="GO" id="GO:0005634">
    <property type="term" value="C:nucleus"/>
    <property type="evidence" value="ECO:0007669"/>
    <property type="project" value="UniProtKB-SubCell"/>
</dbReference>
<dbReference type="GO" id="GO:0000782">
    <property type="term" value="C:telomere cap complex"/>
    <property type="evidence" value="ECO:0000250"/>
    <property type="project" value="UniProtKB"/>
</dbReference>
<dbReference type="GO" id="GO:0042162">
    <property type="term" value="F:telomeric DNA binding"/>
    <property type="evidence" value="ECO:0000250"/>
    <property type="project" value="UniProtKB"/>
</dbReference>
<dbReference type="GO" id="GO:0016233">
    <property type="term" value="P:telomere capping"/>
    <property type="evidence" value="ECO:0000250"/>
    <property type="project" value="UniProtKB"/>
</dbReference>
<organism>
    <name type="scientific">Drosophila yakuba</name>
    <name type="common">Fruit fly</name>
    <dbReference type="NCBI Taxonomy" id="7245"/>
    <lineage>
        <taxon>Eukaryota</taxon>
        <taxon>Metazoa</taxon>
        <taxon>Ecdysozoa</taxon>
        <taxon>Arthropoda</taxon>
        <taxon>Hexapoda</taxon>
        <taxon>Insecta</taxon>
        <taxon>Pterygota</taxon>
        <taxon>Neoptera</taxon>
        <taxon>Endopterygota</taxon>
        <taxon>Diptera</taxon>
        <taxon>Brachycera</taxon>
        <taxon>Muscomorpha</taxon>
        <taxon>Ephydroidea</taxon>
        <taxon>Drosophilidae</taxon>
        <taxon>Drosophila</taxon>
        <taxon>Sophophora</taxon>
    </lineage>
</organism>